<comment type="subunit">
    <text evidence="1">Component of the mitochondrial ribosome small subunit (28S) which comprises a 12S rRNA and about 30 distinct proteins.</text>
</comment>
<comment type="subcellular location">
    <subcellularLocation>
        <location evidence="1">Mitochondrion</location>
    </subcellularLocation>
</comment>
<comment type="similarity">
    <text evidence="2">Belongs to the bacterial ribosomal protein bS21 family.</text>
</comment>
<evidence type="ECO:0000250" key="1">
    <source>
        <dbReference type="UniProtKB" id="P82920"/>
    </source>
</evidence>
<evidence type="ECO:0000305" key="2"/>
<accession>P58059</accession>
<sequence length="87" mass="10561">MAKHLKFIARTVMVQEGNVEGAYRTLNRILTTDGLTEVISRRRYYEKPCRRRQRESYETCRRIYNMEMARKINFLMRKNRADPWLGC</sequence>
<name>RT21_MOUSE</name>
<keyword id="KW-0002">3D-structure</keyword>
<keyword id="KW-0496">Mitochondrion</keyword>
<keyword id="KW-1185">Reference proteome</keyword>
<keyword id="KW-0687">Ribonucleoprotein</keyword>
<keyword id="KW-0689">Ribosomal protein</keyword>
<dbReference type="EMBL" id="AB049956">
    <property type="protein sequence ID" value="BAB41009.1"/>
    <property type="molecule type" value="mRNA"/>
</dbReference>
<dbReference type="EMBL" id="AK002588">
    <property type="protein sequence ID" value="BAC24999.1"/>
    <property type="molecule type" value="mRNA"/>
</dbReference>
<dbReference type="EMBL" id="AK003462">
    <property type="protein sequence ID" value="BAC25036.1"/>
    <property type="molecule type" value="mRNA"/>
</dbReference>
<dbReference type="EMBL" id="AK003602">
    <property type="protein sequence ID" value="BAC25044.1"/>
    <property type="molecule type" value="mRNA"/>
</dbReference>
<dbReference type="EMBL" id="AK007662">
    <property type="protein sequence ID" value="BAC25181.1"/>
    <property type="molecule type" value="mRNA"/>
</dbReference>
<dbReference type="EMBL" id="AK007838">
    <property type="protein sequence ID" value="BAC25189.1"/>
    <property type="molecule type" value="mRNA"/>
</dbReference>
<dbReference type="EMBL" id="AK008265">
    <property type="protein sequence ID" value="BAC25210.1"/>
    <property type="molecule type" value="mRNA"/>
</dbReference>
<dbReference type="EMBL" id="AK008293">
    <property type="protein sequence ID" value="BAC25213.1"/>
    <property type="molecule type" value="mRNA"/>
</dbReference>
<dbReference type="EMBL" id="AK009049">
    <property type="protein sequence ID" value="BAC25237.1"/>
    <property type="molecule type" value="mRNA"/>
</dbReference>
<dbReference type="EMBL" id="AK009703">
    <property type="protein sequence ID" value="BAC25267.1"/>
    <property type="molecule type" value="mRNA"/>
</dbReference>
<dbReference type="EMBL" id="BC027546">
    <property type="protein sequence ID" value="AAH27546.1"/>
    <property type="molecule type" value="mRNA"/>
</dbReference>
<dbReference type="CCDS" id="CCDS38550.1"/>
<dbReference type="RefSeq" id="NP_001342688.1">
    <property type="nucleotide sequence ID" value="NM_001355759.1"/>
</dbReference>
<dbReference type="RefSeq" id="NP_510964.1">
    <property type="nucleotide sequence ID" value="NM_078479.4"/>
</dbReference>
<dbReference type="RefSeq" id="XP_006501942.1">
    <property type="nucleotide sequence ID" value="XM_006501879.2"/>
</dbReference>
<dbReference type="PDB" id="7PNT">
    <property type="method" value="EM"/>
    <property type="resolution" value="3.19 A"/>
    <property type="chains" value="Q=2-87"/>
</dbReference>
<dbReference type="PDB" id="7PNU">
    <property type="method" value="EM"/>
    <property type="resolution" value="3.06 A"/>
    <property type="chains" value="Q=2-87"/>
</dbReference>
<dbReference type="PDB" id="7PNV">
    <property type="method" value="EM"/>
    <property type="resolution" value="3.06 A"/>
    <property type="chains" value="Q=2-87"/>
</dbReference>
<dbReference type="PDB" id="7PNW">
    <property type="method" value="EM"/>
    <property type="resolution" value="3.09 A"/>
    <property type="chains" value="Q=2-87"/>
</dbReference>
<dbReference type="PDBsum" id="7PNT"/>
<dbReference type="PDBsum" id="7PNU"/>
<dbReference type="PDBsum" id="7PNV"/>
<dbReference type="PDBsum" id="7PNW"/>
<dbReference type="EMDB" id="EMD-13551"/>
<dbReference type="EMDB" id="EMD-13552"/>
<dbReference type="EMDB" id="EMD-13553"/>
<dbReference type="EMDB" id="EMD-13554"/>
<dbReference type="SMR" id="P58059"/>
<dbReference type="BioGRID" id="211361">
    <property type="interactions" value="2"/>
</dbReference>
<dbReference type="ComplexPortal" id="CPX-5301">
    <property type="entry name" value="28S mitochondrial small ribosomal subunit"/>
</dbReference>
<dbReference type="FunCoup" id="P58059">
    <property type="interactions" value="1473"/>
</dbReference>
<dbReference type="STRING" id="10090.ENSMUSP00000066990"/>
<dbReference type="iPTMnet" id="P58059"/>
<dbReference type="PhosphoSitePlus" id="P58059"/>
<dbReference type="SwissPalm" id="P58059"/>
<dbReference type="jPOST" id="P58059"/>
<dbReference type="PaxDb" id="10090-ENSMUSP00000066990"/>
<dbReference type="PeptideAtlas" id="P58059"/>
<dbReference type="ProteomicsDB" id="260740"/>
<dbReference type="Pumba" id="P58059"/>
<dbReference type="Antibodypedia" id="74489">
    <property type="antibodies" value="121 antibodies from 23 providers"/>
</dbReference>
<dbReference type="DNASU" id="66292"/>
<dbReference type="Ensembl" id="ENSMUST00000067298.5">
    <property type="protein sequence ID" value="ENSMUSP00000066990.5"/>
    <property type="gene ID" value="ENSMUSG00000054312.7"/>
</dbReference>
<dbReference type="Ensembl" id="ENSMUST00000072587.5">
    <property type="protein sequence ID" value="ENSMUSP00000130403.2"/>
    <property type="gene ID" value="ENSMUSG00000054312.7"/>
</dbReference>
<dbReference type="GeneID" id="66292"/>
<dbReference type="KEGG" id="mmu:66292"/>
<dbReference type="UCSC" id="uc008qli.1">
    <property type="organism name" value="mouse"/>
</dbReference>
<dbReference type="AGR" id="MGI:1913542"/>
<dbReference type="CTD" id="54460"/>
<dbReference type="MGI" id="MGI:1913542">
    <property type="gene designation" value="Mrps21"/>
</dbReference>
<dbReference type="VEuPathDB" id="HostDB:ENSMUSG00000054312"/>
<dbReference type="eggNOG" id="ENOG502S4BS">
    <property type="taxonomic scope" value="Eukaryota"/>
</dbReference>
<dbReference type="GeneTree" id="ENSGT00500000045038"/>
<dbReference type="HOGENOM" id="CLU_167771_0_0_1"/>
<dbReference type="InParanoid" id="P58059"/>
<dbReference type="OMA" id="MRHAQFL"/>
<dbReference type="OrthoDB" id="2501249at2759"/>
<dbReference type="PhylomeDB" id="P58059"/>
<dbReference type="TreeFam" id="TF313903"/>
<dbReference type="Reactome" id="R-MMU-5389840">
    <property type="pathway name" value="Mitochondrial translation elongation"/>
</dbReference>
<dbReference type="Reactome" id="R-MMU-5419276">
    <property type="pathway name" value="Mitochondrial translation termination"/>
</dbReference>
<dbReference type="BioGRID-ORCS" id="66292">
    <property type="hits" value="23 hits in 80 CRISPR screens"/>
</dbReference>
<dbReference type="ChiTaRS" id="Mrps21">
    <property type="organism name" value="mouse"/>
</dbReference>
<dbReference type="PRO" id="PR:P58059"/>
<dbReference type="Proteomes" id="UP000000589">
    <property type="component" value="Chromosome 3"/>
</dbReference>
<dbReference type="RNAct" id="P58059">
    <property type="molecule type" value="protein"/>
</dbReference>
<dbReference type="Bgee" id="ENSMUSG00000054312">
    <property type="expression patterns" value="Expressed in right kidney and 271 other cell types or tissues"/>
</dbReference>
<dbReference type="ExpressionAtlas" id="P58059">
    <property type="expression patterns" value="baseline and differential"/>
</dbReference>
<dbReference type="GO" id="GO:0005743">
    <property type="term" value="C:mitochondrial inner membrane"/>
    <property type="evidence" value="ECO:0007005"/>
    <property type="project" value="MGI"/>
</dbReference>
<dbReference type="GO" id="GO:0005763">
    <property type="term" value="C:mitochondrial small ribosomal subunit"/>
    <property type="evidence" value="ECO:0000250"/>
    <property type="project" value="UniProtKB"/>
</dbReference>
<dbReference type="GO" id="GO:0005739">
    <property type="term" value="C:mitochondrion"/>
    <property type="evidence" value="ECO:0007005"/>
    <property type="project" value="MGI"/>
</dbReference>
<dbReference type="GO" id="GO:0003735">
    <property type="term" value="F:structural constituent of ribosome"/>
    <property type="evidence" value="ECO:0000250"/>
    <property type="project" value="UniProtKB"/>
</dbReference>
<dbReference type="GO" id="GO:0032543">
    <property type="term" value="P:mitochondrial translation"/>
    <property type="evidence" value="ECO:0000250"/>
    <property type="project" value="UniProtKB"/>
</dbReference>
<dbReference type="InterPro" id="IPR001911">
    <property type="entry name" value="Ribosomal_bS21"/>
</dbReference>
<dbReference type="NCBIfam" id="TIGR00030">
    <property type="entry name" value="S21p"/>
    <property type="match status" value="1"/>
</dbReference>
<dbReference type="PANTHER" id="PTHR21109">
    <property type="entry name" value="MITOCHONDRIAL 28S RIBOSOMAL PROTEIN S21"/>
    <property type="match status" value="1"/>
</dbReference>
<dbReference type="PANTHER" id="PTHR21109:SF0">
    <property type="entry name" value="SMALL RIBOSOMAL SUBUNIT PROTEIN BS21M"/>
    <property type="match status" value="1"/>
</dbReference>
<dbReference type="Pfam" id="PF01165">
    <property type="entry name" value="Ribosomal_S21"/>
    <property type="match status" value="1"/>
</dbReference>
<gene>
    <name type="primary">Mrps21</name>
    <name type="synonym">Rpms21</name>
</gene>
<reference key="1">
    <citation type="journal article" date="2001" name="J. Biol. Chem.">
        <title>Proteomic analysis of the mammalian mitochondrial ribosome. Identification of protein components in the 28S small subunit.</title>
        <authorList>
            <person name="Suzuki T."/>
            <person name="Terasaki M."/>
            <person name="Takemoto-Hori C."/>
            <person name="Hanada T."/>
            <person name="Ueda T."/>
            <person name="Wada A."/>
            <person name="Watanabe K."/>
        </authorList>
    </citation>
    <scope>NUCLEOTIDE SEQUENCE [MRNA]</scope>
</reference>
<reference key="2">
    <citation type="journal article" date="2005" name="Science">
        <title>The transcriptional landscape of the mammalian genome.</title>
        <authorList>
            <person name="Carninci P."/>
            <person name="Kasukawa T."/>
            <person name="Katayama S."/>
            <person name="Gough J."/>
            <person name="Frith M.C."/>
            <person name="Maeda N."/>
            <person name="Oyama R."/>
            <person name="Ravasi T."/>
            <person name="Lenhard B."/>
            <person name="Wells C."/>
            <person name="Kodzius R."/>
            <person name="Shimokawa K."/>
            <person name="Bajic V.B."/>
            <person name="Brenner S.E."/>
            <person name="Batalov S."/>
            <person name="Forrest A.R."/>
            <person name="Zavolan M."/>
            <person name="Davis M.J."/>
            <person name="Wilming L.G."/>
            <person name="Aidinis V."/>
            <person name="Allen J.E."/>
            <person name="Ambesi-Impiombato A."/>
            <person name="Apweiler R."/>
            <person name="Aturaliya R.N."/>
            <person name="Bailey T.L."/>
            <person name="Bansal M."/>
            <person name="Baxter L."/>
            <person name="Beisel K.W."/>
            <person name="Bersano T."/>
            <person name="Bono H."/>
            <person name="Chalk A.M."/>
            <person name="Chiu K.P."/>
            <person name="Choudhary V."/>
            <person name="Christoffels A."/>
            <person name="Clutterbuck D.R."/>
            <person name="Crowe M.L."/>
            <person name="Dalla E."/>
            <person name="Dalrymple B.P."/>
            <person name="de Bono B."/>
            <person name="Della Gatta G."/>
            <person name="di Bernardo D."/>
            <person name="Down T."/>
            <person name="Engstrom P."/>
            <person name="Fagiolini M."/>
            <person name="Faulkner G."/>
            <person name="Fletcher C.F."/>
            <person name="Fukushima T."/>
            <person name="Furuno M."/>
            <person name="Futaki S."/>
            <person name="Gariboldi M."/>
            <person name="Georgii-Hemming P."/>
            <person name="Gingeras T.R."/>
            <person name="Gojobori T."/>
            <person name="Green R.E."/>
            <person name="Gustincich S."/>
            <person name="Harbers M."/>
            <person name="Hayashi Y."/>
            <person name="Hensch T.K."/>
            <person name="Hirokawa N."/>
            <person name="Hill D."/>
            <person name="Huminiecki L."/>
            <person name="Iacono M."/>
            <person name="Ikeo K."/>
            <person name="Iwama A."/>
            <person name="Ishikawa T."/>
            <person name="Jakt M."/>
            <person name="Kanapin A."/>
            <person name="Katoh M."/>
            <person name="Kawasawa Y."/>
            <person name="Kelso J."/>
            <person name="Kitamura H."/>
            <person name="Kitano H."/>
            <person name="Kollias G."/>
            <person name="Krishnan S.P."/>
            <person name="Kruger A."/>
            <person name="Kummerfeld S.K."/>
            <person name="Kurochkin I.V."/>
            <person name="Lareau L.F."/>
            <person name="Lazarevic D."/>
            <person name="Lipovich L."/>
            <person name="Liu J."/>
            <person name="Liuni S."/>
            <person name="McWilliam S."/>
            <person name="Madan Babu M."/>
            <person name="Madera M."/>
            <person name="Marchionni L."/>
            <person name="Matsuda H."/>
            <person name="Matsuzawa S."/>
            <person name="Miki H."/>
            <person name="Mignone F."/>
            <person name="Miyake S."/>
            <person name="Morris K."/>
            <person name="Mottagui-Tabar S."/>
            <person name="Mulder N."/>
            <person name="Nakano N."/>
            <person name="Nakauchi H."/>
            <person name="Ng P."/>
            <person name="Nilsson R."/>
            <person name="Nishiguchi S."/>
            <person name="Nishikawa S."/>
            <person name="Nori F."/>
            <person name="Ohara O."/>
            <person name="Okazaki Y."/>
            <person name="Orlando V."/>
            <person name="Pang K.C."/>
            <person name="Pavan W.J."/>
            <person name="Pavesi G."/>
            <person name="Pesole G."/>
            <person name="Petrovsky N."/>
            <person name="Piazza S."/>
            <person name="Reed J."/>
            <person name="Reid J.F."/>
            <person name="Ring B.Z."/>
            <person name="Ringwald M."/>
            <person name="Rost B."/>
            <person name="Ruan Y."/>
            <person name="Salzberg S.L."/>
            <person name="Sandelin A."/>
            <person name="Schneider C."/>
            <person name="Schoenbach C."/>
            <person name="Sekiguchi K."/>
            <person name="Semple C.A."/>
            <person name="Seno S."/>
            <person name="Sessa L."/>
            <person name="Sheng Y."/>
            <person name="Shibata Y."/>
            <person name="Shimada H."/>
            <person name="Shimada K."/>
            <person name="Silva D."/>
            <person name="Sinclair B."/>
            <person name="Sperling S."/>
            <person name="Stupka E."/>
            <person name="Sugiura K."/>
            <person name="Sultana R."/>
            <person name="Takenaka Y."/>
            <person name="Taki K."/>
            <person name="Tammoja K."/>
            <person name="Tan S.L."/>
            <person name="Tang S."/>
            <person name="Taylor M.S."/>
            <person name="Tegner J."/>
            <person name="Teichmann S.A."/>
            <person name="Ueda H.R."/>
            <person name="van Nimwegen E."/>
            <person name="Verardo R."/>
            <person name="Wei C.L."/>
            <person name="Yagi K."/>
            <person name="Yamanishi H."/>
            <person name="Zabarovsky E."/>
            <person name="Zhu S."/>
            <person name="Zimmer A."/>
            <person name="Hide W."/>
            <person name="Bult C."/>
            <person name="Grimmond S.M."/>
            <person name="Teasdale R.D."/>
            <person name="Liu E.T."/>
            <person name="Brusic V."/>
            <person name="Quackenbush J."/>
            <person name="Wahlestedt C."/>
            <person name="Mattick J.S."/>
            <person name="Hume D.A."/>
            <person name="Kai C."/>
            <person name="Sasaki D."/>
            <person name="Tomaru Y."/>
            <person name="Fukuda S."/>
            <person name="Kanamori-Katayama M."/>
            <person name="Suzuki M."/>
            <person name="Aoki J."/>
            <person name="Arakawa T."/>
            <person name="Iida J."/>
            <person name="Imamura K."/>
            <person name="Itoh M."/>
            <person name="Kato T."/>
            <person name="Kawaji H."/>
            <person name="Kawagashira N."/>
            <person name="Kawashima T."/>
            <person name="Kojima M."/>
            <person name="Kondo S."/>
            <person name="Konno H."/>
            <person name="Nakano K."/>
            <person name="Ninomiya N."/>
            <person name="Nishio T."/>
            <person name="Okada M."/>
            <person name="Plessy C."/>
            <person name="Shibata K."/>
            <person name="Shiraki T."/>
            <person name="Suzuki S."/>
            <person name="Tagami M."/>
            <person name="Waki K."/>
            <person name="Watahiki A."/>
            <person name="Okamura-Oho Y."/>
            <person name="Suzuki H."/>
            <person name="Kawai J."/>
            <person name="Hayashizaki Y."/>
        </authorList>
    </citation>
    <scope>NUCLEOTIDE SEQUENCE [LARGE SCALE MRNA]</scope>
    <source>
        <strain>C57BL/6J</strain>
        <tissue>Kidney</tissue>
        <tissue>Pancreas</tissue>
        <tissue>Small intestine</tissue>
        <tissue>Tongue</tissue>
    </source>
</reference>
<reference key="3">
    <citation type="journal article" date="2004" name="Genome Res.">
        <title>The status, quality, and expansion of the NIH full-length cDNA project: the Mammalian Gene Collection (MGC).</title>
        <authorList>
            <consortium name="The MGC Project Team"/>
        </authorList>
    </citation>
    <scope>NUCLEOTIDE SEQUENCE [LARGE SCALE MRNA]</scope>
    <source>
        <tissue>Mammary gland</tissue>
    </source>
</reference>
<reference key="4">
    <citation type="journal article" date="2010" name="Cell">
        <title>A tissue-specific atlas of mouse protein phosphorylation and expression.</title>
        <authorList>
            <person name="Huttlin E.L."/>
            <person name="Jedrychowski M.P."/>
            <person name="Elias J.E."/>
            <person name="Goswami T."/>
            <person name="Rad R."/>
            <person name="Beausoleil S.A."/>
            <person name="Villen J."/>
            <person name="Haas W."/>
            <person name="Sowa M.E."/>
            <person name="Gygi S.P."/>
        </authorList>
    </citation>
    <scope>IDENTIFICATION BY MASS SPECTROMETRY [LARGE SCALE ANALYSIS]</scope>
    <source>
        <tissue>Brain</tissue>
        <tissue>Brown adipose tissue</tissue>
        <tissue>Heart</tissue>
        <tissue>Kidney</tissue>
        <tissue>Liver</tissue>
        <tissue>Lung</tissue>
        <tissue>Spleen</tissue>
        <tissue>Testis</tissue>
    </source>
</reference>
<feature type="chain" id="PRO_0000178414" description="Small ribosomal subunit protein bS21m">
    <location>
        <begin position="1"/>
        <end position="87"/>
    </location>
</feature>
<proteinExistence type="evidence at protein level"/>
<organism>
    <name type="scientific">Mus musculus</name>
    <name type="common">Mouse</name>
    <dbReference type="NCBI Taxonomy" id="10090"/>
    <lineage>
        <taxon>Eukaryota</taxon>
        <taxon>Metazoa</taxon>
        <taxon>Chordata</taxon>
        <taxon>Craniata</taxon>
        <taxon>Vertebrata</taxon>
        <taxon>Euteleostomi</taxon>
        <taxon>Mammalia</taxon>
        <taxon>Eutheria</taxon>
        <taxon>Euarchontoglires</taxon>
        <taxon>Glires</taxon>
        <taxon>Rodentia</taxon>
        <taxon>Myomorpha</taxon>
        <taxon>Muroidea</taxon>
        <taxon>Muridae</taxon>
        <taxon>Murinae</taxon>
        <taxon>Mus</taxon>
        <taxon>Mus</taxon>
    </lineage>
</organism>
<protein>
    <recommendedName>
        <fullName evidence="2">Small ribosomal subunit protein bS21m</fullName>
    </recommendedName>
    <alternativeName>
        <fullName>28S ribosomal protein S21, mitochondrial</fullName>
        <shortName>MRP-S21</shortName>
        <shortName>S21mt</shortName>
    </alternativeName>
</protein>